<feature type="chain" id="PRO_0000130720" description="Large ribosomal subunit protein uL24">
    <location>
        <begin position="1"/>
        <end position="105"/>
    </location>
</feature>
<proteinExistence type="inferred from homology"/>
<dbReference type="EMBL" id="AE015929">
    <property type="protein sequence ID" value="AAO05453.1"/>
    <property type="molecule type" value="Genomic_DNA"/>
</dbReference>
<dbReference type="RefSeq" id="NP_765367.1">
    <property type="nucleotide sequence ID" value="NC_004461.1"/>
</dbReference>
<dbReference type="RefSeq" id="WP_002447331.1">
    <property type="nucleotide sequence ID" value="NZ_WBME01000007.1"/>
</dbReference>
<dbReference type="SMR" id="Q8CRH1"/>
<dbReference type="KEGG" id="sep:SE_1812"/>
<dbReference type="PATRIC" id="fig|176280.10.peg.1769"/>
<dbReference type="eggNOG" id="COG0198">
    <property type="taxonomic scope" value="Bacteria"/>
</dbReference>
<dbReference type="HOGENOM" id="CLU_093315_2_0_9"/>
<dbReference type="OrthoDB" id="9807419at2"/>
<dbReference type="Proteomes" id="UP000001411">
    <property type="component" value="Chromosome"/>
</dbReference>
<dbReference type="GO" id="GO:1990904">
    <property type="term" value="C:ribonucleoprotein complex"/>
    <property type="evidence" value="ECO:0007669"/>
    <property type="project" value="UniProtKB-KW"/>
</dbReference>
<dbReference type="GO" id="GO:0005840">
    <property type="term" value="C:ribosome"/>
    <property type="evidence" value="ECO:0007669"/>
    <property type="project" value="UniProtKB-KW"/>
</dbReference>
<dbReference type="GO" id="GO:0019843">
    <property type="term" value="F:rRNA binding"/>
    <property type="evidence" value="ECO:0007669"/>
    <property type="project" value="UniProtKB-UniRule"/>
</dbReference>
<dbReference type="GO" id="GO:0003735">
    <property type="term" value="F:structural constituent of ribosome"/>
    <property type="evidence" value="ECO:0007669"/>
    <property type="project" value="InterPro"/>
</dbReference>
<dbReference type="GO" id="GO:0006412">
    <property type="term" value="P:translation"/>
    <property type="evidence" value="ECO:0007669"/>
    <property type="project" value="UniProtKB-UniRule"/>
</dbReference>
<dbReference type="CDD" id="cd06089">
    <property type="entry name" value="KOW_RPL26"/>
    <property type="match status" value="1"/>
</dbReference>
<dbReference type="FunFam" id="2.30.30.30:FF:000004">
    <property type="entry name" value="50S ribosomal protein L24"/>
    <property type="match status" value="1"/>
</dbReference>
<dbReference type="Gene3D" id="2.30.30.30">
    <property type="match status" value="1"/>
</dbReference>
<dbReference type="HAMAP" id="MF_01326_B">
    <property type="entry name" value="Ribosomal_uL24_B"/>
    <property type="match status" value="1"/>
</dbReference>
<dbReference type="InterPro" id="IPR005824">
    <property type="entry name" value="KOW"/>
</dbReference>
<dbReference type="InterPro" id="IPR014722">
    <property type="entry name" value="Rib_uL2_dom2"/>
</dbReference>
<dbReference type="InterPro" id="IPR003256">
    <property type="entry name" value="Ribosomal_uL24"/>
</dbReference>
<dbReference type="InterPro" id="IPR005825">
    <property type="entry name" value="Ribosomal_uL24_CS"/>
</dbReference>
<dbReference type="InterPro" id="IPR041988">
    <property type="entry name" value="Ribosomal_uL24_KOW"/>
</dbReference>
<dbReference type="InterPro" id="IPR008991">
    <property type="entry name" value="Translation_prot_SH3-like_sf"/>
</dbReference>
<dbReference type="NCBIfam" id="TIGR01079">
    <property type="entry name" value="rplX_bact"/>
    <property type="match status" value="1"/>
</dbReference>
<dbReference type="PANTHER" id="PTHR12903">
    <property type="entry name" value="MITOCHONDRIAL RIBOSOMAL PROTEIN L24"/>
    <property type="match status" value="1"/>
</dbReference>
<dbReference type="Pfam" id="PF00467">
    <property type="entry name" value="KOW"/>
    <property type="match status" value="1"/>
</dbReference>
<dbReference type="Pfam" id="PF17136">
    <property type="entry name" value="ribosomal_L24"/>
    <property type="match status" value="1"/>
</dbReference>
<dbReference type="SMART" id="SM00739">
    <property type="entry name" value="KOW"/>
    <property type="match status" value="1"/>
</dbReference>
<dbReference type="SUPFAM" id="SSF50104">
    <property type="entry name" value="Translation proteins SH3-like domain"/>
    <property type="match status" value="1"/>
</dbReference>
<dbReference type="PROSITE" id="PS01108">
    <property type="entry name" value="RIBOSOMAL_L24"/>
    <property type="match status" value="1"/>
</dbReference>
<protein>
    <recommendedName>
        <fullName evidence="1">Large ribosomal subunit protein uL24</fullName>
    </recommendedName>
    <alternativeName>
        <fullName evidence="2">50S ribosomal protein L24</fullName>
    </alternativeName>
</protein>
<comment type="function">
    <text evidence="1">One of two assembly initiator proteins, it binds directly to the 5'-end of the 23S rRNA, where it nucleates assembly of the 50S subunit.</text>
</comment>
<comment type="function">
    <text evidence="1">One of the proteins that surrounds the polypeptide exit tunnel on the outside of the subunit.</text>
</comment>
<comment type="subunit">
    <text evidence="1">Part of the 50S ribosomal subunit.</text>
</comment>
<comment type="similarity">
    <text evidence="1">Belongs to the universal ribosomal protein uL24 family.</text>
</comment>
<accession>Q8CRH1</accession>
<gene>
    <name evidence="1" type="primary">rplX</name>
    <name type="ordered locus">SE_1812</name>
</gene>
<reference key="1">
    <citation type="journal article" date="2003" name="Mol. Microbiol.">
        <title>Genome-based analysis of virulence genes in a non-biofilm-forming Staphylococcus epidermidis strain (ATCC 12228).</title>
        <authorList>
            <person name="Zhang Y.-Q."/>
            <person name="Ren S.-X."/>
            <person name="Li H.-L."/>
            <person name="Wang Y.-X."/>
            <person name="Fu G."/>
            <person name="Yang J."/>
            <person name="Qin Z.-Q."/>
            <person name="Miao Y.-G."/>
            <person name="Wang W.-Y."/>
            <person name="Chen R.-S."/>
            <person name="Shen Y."/>
            <person name="Chen Z."/>
            <person name="Yuan Z.-H."/>
            <person name="Zhao G.-P."/>
            <person name="Qu D."/>
            <person name="Danchin A."/>
            <person name="Wen Y.-M."/>
        </authorList>
    </citation>
    <scope>NUCLEOTIDE SEQUENCE [LARGE SCALE GENOMIC DNA]</scope>
    <source>
        <strain>ATCC 12228 / FDA PCI 1200</strain>
    </source>
</reference>
<organism>
    <name type="scientific">Staphylococcus epidermidis (strain ATCC 12228 / FDA PCI 1200)</name>
    <dbReference type="NCBI Taxonomy" id="176280"/>
    <lineage>
        <taxon>Bacteria</taxon>
        <taxon>Bacillati</taxon>
        <taxon>Bacillota</taxon>
        <taxon>Bacilli</taxon>
        <taxon>Bacillales</taxon>
        <taxon>Staphylococcaceae</taxon>
        <taxon>Staphylococcus</taxon>
    </lineage>
</organism>
<keyword id="KW-0687">Ribonucleoprotein</keyword>
<keyword id="KW-0689">Ribosomal protein</keyword>
<keyword id="KW-0694">RNA-binding</keyword>
<keyword id="KW-0699">rRNA-binding</keyword>
<sequence length="105" mass="11444">MHIKKGDNVKVIAGKDKGKEGKVVATEPKKDRVVVEGVNVIKKHQKPTQLNPEGGILETEAAIHVSNVQLLDPKTNEPTRVGYKTVDGKKVRIAKKSGEEIKANN</sequence>
<evidence type="ECO:0000255" key="1">
    <source>
        <dbReference type="HAMAP-Rule" id="MF_01326"/>
    </source>
</evidence>
<evidence type="ECO:0000305" key="2"/>
<name>RL24_STAES</name>